<gene>
    <name evidence="1" type="primary">rpoC</name>
    <name type="ordered locus">PM1736</name>
</gene>
<protein>
    <recommendedName>
        <fullName evidence="1">DNA-directed RNA polymerase subunit beta'</fullName>
        <shortName evidence="1">RNAP subunit beta'</shortName>
        <ecNumber evidence="1">2.7.7.6</ecNumber>
    </recommendedName>
    <alternativeName>
        <fullName evidence="1">RNA polymerase subunit beta'</fullName>
    </alternativeName>
    <alternativeName>
        <fullName evidence="1">Transcriptase subunit beta'</fullName>
    </alternativeName>
</protein>
<reference key="1">
    <citation type="journal article" date="2001" name="Proc. Natl. Acad. Sci. U.S.A.">
        <title>Complete genomic sequence of Pasteurella multocida Pm70.</title>
        <authorList>
            <person name="May B.J."/>
            <person name="Zhang Q."/>
            <person name="Li L.L."/>
            <person name="Paustian M.L."/>
            <person name="Whittam T.S."/>
            <person name="Kapur V."/>
        </authorList>
    </citation>
    <scope>NUCLEOTIDE SEQUENCE [LARGE SCALE GENOMIC DNA]</scope>
    <source>
        <strain>Pm70</strain>
    </source>
</reference>
<feature type="chain" id="PRO_0000067772" description="DNA-directed RNA polymerase subunit beta'">
    <location>
        <begin position="1"/>
        <end position="1417"/>
    </location>
</feature>
<feature type="binding site" evidence="1">
    <location>
        <position position="71"/>
    </location>
    <ligand>
        <name>Zn(2+)</name>
        <dbReference type="ChEBI" id="CHEBI:29105"/>
        <label>1</label>
    </ligand>
</feature>
<feature type="binding site" evidence="1">
    <location>
        <position position="73"/>
    </location>
    <ligand>
        <name>Zn(2+)</name>
        <dbReference type="ChEBI" id="CHEBI:29105"/>
        <label>1</label>
    </ligand>
</feature>
<feature type="binding site" evidence="1">
    <location>
        <position position="86"/>
    </location>
    <ligand>
        <name>Zn(2+)</name>
        <dbReference type="ChEBI" id="CHEBI:29105"/>
        <label>1</label>
    </ligand>
</feature>
<feature type="binding site" evidence="1">
    <location>
        <position position="89"/>
    </location>
    <ligand>
        <name>Zn(2+)</name>
        <dbReference type="ChEBI" id="CHEBI:29105"/>
        <label>1</label>
    </ligand>
</feature>
<feature type="binding site" evidence="1">
    <location>
        <position position="461"/>
    </location>
    <ligand>
        <name>Mg(2+)</name>
        <dbReference type="ChEBI" id="CHEBI:18420"/>
    </ligand>
</feature>
<feature type="binding site" evidence="1">
    <location>
        <position position="463"/>
    </location>
    <ligand>
        <name>Mg(2+)</name>
        <dbReference type="ChEBI" id="CHEBI:18420"/>
    </ligand>
</feature>
<feature type="binding site" evidence="1">
    <location>
        <position position="465"/>
    </location>
    <ligand>
        <name>Mg(2+)</name>
        <dbReference type="ChEBI" id="CHEBI:18420"/>
    </ligand>
</feature>
<feature type="binding site" evidence="1">
    <location>
        <position position="815"/>
    </location>
    <ligand>
        <name>Zn(2+)</name>
        <dbReference type="ChEBI" id="CHEBI:29105"/>
        <label>2</label>
    </ligand>
</feature>
<feature type="binding site" evidence="1">
    <location>
        <position position="889"/>
    </location>
    <ligand>
        <name>Zn(2+)</name>
        <dbReference type="ChEBI" id="CHEBI:29105"/>
        <label>2</label>
    </ligand>
</feature>
<feature type="binding site" evidence="1">
    <location>
        <position position="896"/>
    </location>
    <ligand>
        <name>Zn(2+)</name>
        <dbReference type="ChEBI" id="CHEBI:29105"/>
        <label>2</label>
    </ligand>
</feature>
<feature type="binding site" evidence="1">
    <location>
        <position position="899"/>
    </location>
    <ligand>
        <name>Zn(2+)</name>
        <dbReference type="ChEBI" id="CHEBI:29105"/>
        <label>2</label>
    </ligand>
</feature>
<evidence type="ECO:0000255" key="1">
    <source>
        <dbReference type="HAMAP-Rule" id="MF_01322"/>
    </source>
</evidence>
<organism>
    <name type="scientific">Pasteurella multocida (strain Pm70)</name>
    <dbReference type="NCBI Taxonomy" id="272843"/>
    <lineage>
        <taxon>Bacteria</taxon>
        <taxon>Pseudomonadati</taxon>
        <taxon>Pseudomonadota</taxon>
        <taxon>Gammaproteobacteria</taxon>
        <taxon>Pasteurellales</taxon>
        <taxon>Pasteurellaceae</taxon>
        <taxon>Pasteurella</taxon>
    </lineage>
</organism>
<accession>Q9CK92</accession>
<proteinExistence type="inferred from homology"/>
<keyword id="KW-0240">DNA-directed RNA polymerase</keyword>
<keyword id="KW-0460">Magnesium</keyword>
<keyword id="KW-0479">Metal-binding</keyword>
<keyword id="KW-0548">Nucleotidyltransferase</keyword>
<keyword id="KW-1185">Reference proteome</keyword>
<keyword id="KW-0804">Transcription</keyword>
<keyword id="KW-0808">Transferase</keyword>
<keyword id="KW-0862">Zinc</keyword>
<sequence length="1417" mass="157187">MKDLVKFLKAQSKTSEDFDVIKIGLASPDMIRSWSFGEVKKPETINYRTFKPERDGLFCARIFGPVKDYECLCGKYKRLKHRGVICEKCGVEVTQTKVRRERMGHIELASPVAHIWFLKSLPSRIGLLLDMPLRDIERVLYFESYIVIEPGMTDLDKGQLLTEEQYIDAEDRWGDEFDAKMGAEAIQALLRDMDLPQECENLREELQETNSETKRKKITKRLKLLEAFIQSGNKPEWMVMTVLPVLPPDLRPLVPLDGGRFATSDLNDLYRRVINRNNRLKRLLDLIAPDIIVRNEKRMLQESVDALLDNGRRGRAITGSNRRPLKSLADMIKGKQGRFRQNLLGKRVDYSGRSVITVGPYLHLHQCGLPKKMALELFRPFIYAKLESRGFASTIKAAKKMVEREDAIVWDILADVIREHPILLNRAPTLHRLGIQAFEPLLIEGKAIQLHPLVCAAFNADFDGDQMAVHVPLTLEAQLEARALMMSTNNILSPANGEPIIVPSQDVVLGLYYMTRDKVNGKGEGMLLQDPREAEKAYRTGQVELHSRVKVRITEYVKNAVGEFEPQTNLVDTTIGRAILWMIAPKGMPFSLFNQTLGKKAISKLINESYRRLGMKPSVLFADQIMYTGFAYAARSGSSVGIDDMVIPAKKYEIISAAEDEVAEIQEQFQSGLVTAGERYNKVIDIWAAANERVAKAMMENLSTEEVINREGQPEKQASFNSIFMMADSGARGSAAQIRQLAGMRGLMARPDGSIIETPITANFREGLNVLQYFISTHGARKGLADTALKTANSGYLTRRLVDVAQDLVIIEDDCGTHEGIVMTPLIEGGDVKEALRDRVLGRVVAEDVLKPGTEEVLIARNTLLDEKLCDVIDSNSVDSIKVRSVVTCNTDFGVCAKCYGRDLARGHLINQGEAVGVIAAQSIGEPGTQLTMRTFHIGGAASAAAKESSIQVKNTGTLRLANVKFVTNNEGKLVLTSRNTELTIIDAFGRTKEHYKVPYGAILSKGDGQEVTAGETVANWDPHTMPVVSEVSGFVKFIDLIDGLTVTRQTDELTGLSSIVVQDVGERATAGKDLRPAIKLVDAKGNDILIPGTDVVAQYFLPGKAIVTLDDNAEVHIGEPLARIPQESVGTKDITGGLPRVADLFEARKPKEPAILAEISGIVSFGKETKGKRRLLITPAEGETYEEMIPKWRQLNVFEGEMVERGDLISDGAETPHDILRLRGVHAVTEYIVNEVQEVYRLQGVKINDKHIEVIVRQMLRKGIVTKAYDSEFLEGEQVEVARVKIVNRKREAEGKPLVEFERELLGITKASLATESFISAASFQETTRVLTEAAVAGKRDELRGLKENVIVGRLIPAGTGFAYHQNRQKKVVMSDEMPVKLSAADEEEIAAEFTVTAEDATASLAEMLNMADDAE</sequence>
<name>RPOC_PASMU</name>
<dbReference type="EC" id="2.7.7.6" evidence="1"/>
<dbReference type="EMBL" id="AE004439">
    <property type="protein sequence ID" value="AAK03820.1"/>
    <property type="molecule type" value="Genomic_DNA"/>
</dbReference>
<dbReference type="RefSeq" id="WP_005724687.1">
    <property type="nucleotide sequence ID" value="NC_002663.1"/>
</dbReference>
<dbReference type="SMR" id="Q9CK92"/>
<dbReference type="STRING" id="272843.PM1736"/>
<dbReference type="EnsemblBacteria" id="AAK03820">
    <property type="protein sequence ID" value="AAK03820"/>
    <property type="gene ID" value="PM1736"/>
</dbReference>
<dbReference type="GeneID" id="77206666"/>
<dbReference type="KEGG" id="pmu:PM1736"/>
<dbReference type="PATRIC" id="fig|272843.6.peg.1758"/>
<dbReference type="HOGENOM" id="CLU_000524_3_1_6"/>
<dbReference type="OrthoDB" id="9815296at2"/>
<dbReference type="Proteomes" id="UP000000809">
    <property type="component" value="Chromosome"/>
</dbReference>
<dbReference type="GO" id="GO:0000428">
    <property type="term" value="C:DNA-directed RNA polymerase complex"/>
    <property type="evidence" value="ECO:0007669"/>
    <property type="project" value="UniProtKB-KW"/>
</dbReference>
<dbReference type="GO" id="GO:0003677">
    <property type="term" value="F:DNA binding"/>
    <property type="evidence" value="ECO:0007669"/>
    <property type="project" value="UniProtKB-UniRule"/>
</dbReference>
<dbReference type="GO" id="GO:0003899">
    <property type="term" value="F:DNA-directed RNA polymerase activity"/>
    <property type="evidence" value="ECO:0007669"/>
    <property type="project" value="UniProtKB-UniRule"/>
</dbReference>
<dbReference type="GO" id="GO:0000287">
    <property type="term" value="F:magnesium ion binding"/>
    <property type="evidence" value="ECO:0007669"/>
    <property type="project" value="UniProtKB-UniRule"/>
</dbReference>
<dbReference type="GO" id="GO:0008270">
    <property type="term" value="F:zinc ion binding"/>
    <property type="evidence" value="ECO:0007669"/>
    <property type="project" value="UniProtKB-UniRule"/>
</dbReference>
<dbReference type="GO" id="GO:0006351">
    <property type="term" value="P:DNA-templated transcription"/>
    <property type="evidence" value="ECO:0007669"/>
    <property type="project" value="UniProtKB-UniRule"/>
</dbReference>
<dbReference type="CDD" id="cd02655">
    <property type="entry name" value="RNAP_beta'_C"/>
    <property type="match status" value="1"/>
</dbReference>
<dbReference type="CDD" id="cd01609">
    <property type="entry name" value="RNAP_beta'_N"/>
    <property type="match status" value="1"/>
</dbReference>
<dbReference type="FunFam" id="1.10.132.30:FF:000003">
    <property type="entry name" value="DNA-directed RNA polymerase subunit beta"/>
    <property type="match status" value="1"/>
</dbReference>
<dbReference type="FunFam" id="1.10.150.390:FF:000002">
    <property type="entry name" value="DNA-directed RNA polymerase subunit beta"/>
    <property type="match status" value="1"/>
</dbReference>
<dbReference type="FunFam" id="4.10.860.120:FF:000001">
    <property type="entry name" value="DNA-directed RNA polymerase subunit beta"/>
    <property type="match status" value="1"/>
</dbReference>
<dbReference type="Gene3D" id="1.10.132.30">
    <property type="match status" value="1"/>
</dbReference>
<dbReference type="Gene3D" id="1.10.150.390">
    <property type="match status" value="1"/>
</dbReference>
<dbReference type="Gene3D" id="1.10.1790.20">
    <property type="match status" value="1"/>
</dbReference>
<dbReference type="Gene3D" id="1.10.40.90">
    <property type="match status" value="1"/>
</dbReference>
<dbReference type="Gene3D" id="2.40.40.20">
    <property type="match status" value="1"/>
</dbReference>
<dbReference type="Gene3D" id="2.40.50.100">
    <property type="match status" value="3"/>
</dbReference>
<dbReference type="Gene3D" id="4.10.860.120">
    <property type="entry name" value="RNA polymerase II, clamp domain"/>
    <property type="match status" value="1"/>
</dbReference>
<dbReference type="Gene3D" id="1.10.274.100">
    <property type="entry name" value="RNA polymerase Rpb1, domain 3"/>
    <property type="match status" value="1"/>
</dbReference>
<dbReference type="HAMAP" id="MF_01322">
    <property type="entry name" value="RNApol_bact_RpoC"/>
    <property type="match status" value="1"/>
</dbReference>
<dbReference type="InterPro" id="IPR045867">
    <property type="entry name" value="DNA-dir_RpoC_beta_prime"/>
</dbReference>
<dbReference type="InterPro" id="IPR012754">
    <property type="entry name" value="DNA-dir_RpoC_beta_prime_bact"/>
</dbReference>
<dbReference type="InterPro" id="IPR000722">
    <property type="entry name" value="RNA_pol_asu"/>
</dbReference>
<dbReference type="InterPro" id="IPR006592">
    <property type="entry name" value="RNA_pol_N"/>
</dbReference>
<dbReference type="InterPro" id="IPR007080">
    <property type="entry name" value="RNA_pol_Rpb1_1"/>
</dbReference>
<dbReference type="InterPro" id="IPR007066">
    <property type="entry name" value="RNA_pol_Rpb1_3"/>
</dbReference>
<dbReference type="InterPro" id="IPR042102">
    <property type="entry name" value="RNA_pol_Rpb1_3_sf"/>
</dbReference>
<dbReference type="InterPro" id="IPR007083">
    <property type="entry name" value="RNA_pol_Rpb1_4"/>
</dbReference>
<dbReference type="InterPro" id="IPR007081">
    <property type="entry name" value="RNA_pol_Rpb1_5"/>
</dbReference>
<dbReference type="InterPro" id="IPR044893">
    <property type="entry name" value="RNA_pol_Rpb1_clamp_domain"/>
</dbReference>
<dbReference type="InterPro" id="IPR038120">
    <property type="entry name" value="Rpb1_funnel_sf"/>
</dbReference>
<dbReference type="NCBIfam" id="TIGR02386">
    <property type="entry name" value="rpoC_TIGR"/>
    <property type="match status" value="1"/>
</dbReference>
<dbReference type="PANTHER" id="PTHR19376">
    <property type="entry name" value="DNA-DIRECTED RNA POLYMERASE"/>
    <property type="match status" value="1"/>
</dbReference>
<dbReference type="PANTHER" id="PTHR19376:SF54">
    <property type="entry name" value="DNA-DIRECTED RNA POLYMERASE SUBUNIT BETA"/>
    <property type="match status" value="1"/>
</dbReference>
<dbReference type="Pfam" id="PF04997">
    <property type="entry name" value="RNA_pol_Rpb1_1"/>
    <property type="match status" value="1"/>
</dbReference>
<dbReference type="Pfam" id="PF00623">
    <property type="entry name" value="RNA_pol_Rpb1_2"/>
    <property type="match status" value="2"/>
</dbReference>
<dbReference type="Pfam" id="PF04983">
    <property type="entry name" value="RNA_pol_Rpb1_3"/>
    <property type="match status" value="1"/>
</dbReference>
<dbReference type="Pfam" id="PF05000">
    <property type="entry name" value="RNA_pol_Rpb1_4"/>
    <property type="match status" value="1"/>
</dbReference>
<dbReference type="Pfam" id="PF04998">
    <property type="entry name" value="RNA_pol_Rpb1_5"/>
    <property type="match status" value="1"/>
</dbReference>
<dbReference type="SMART" id="SM00663">
    <property type="entry name" value="RPOLA_N"/>
    <property type="match status" value="1"/>
</dbReference>
<dbReference type="SUPFAM" id="SSF64484">
    <property type="entry name" value="beta and beta-prime subunits of DNA dependent RNA-polymerase"/>
    <property type="match status" value="1"/>
</dbReference>
<comment type="function">
    <text evidence="1">DNA-dependent RNA polymerase catalyzes the transcription of DNA into RNA using the four ribonucleoside triphosphates as substrates.</text>
</comment>
<comment type="catalytic activity">
    <reaction evidence="1">
        <text>RNA(n) + a ribonucleoside 5'-triphosphate = RNA(n+1) + diphosphate</text>
        <dbReference type="Rhea" id="RHEA:21248"/>
        <dbReference type="Rhea" id="RHEA-COMP:14527"/>
        <dbReference type="Rhea" id="RHEA-COMP:17342"/>
        <dbReference type="ChEBI" id="CHEBI:33019"/>
        <dbReference type="ChEBI" id="CHEBI:61557"/>
        <dbReference type="ChEBI" id="CHEBI:140395"/>
        <dbReference type="EC" id="2.7.7.6"/>
    </reaction>
</comment>
<comment type="cofactor">
    <cofactor evidence="1">
        <name>Mg(2+)</name>
        <dbReference type="ChEBI" id="CHEBI:18420"/>
    </cofactor>
    <text evidence="1">Binds 1 Mg(2+) ion per subunit.</text>
</comment>
<comment type="cofactor">
    <cofactor evidence="1">
        <name>Zn(2+)</name>
        <dbReference type="ChEBI" id="CHEBI:29105"/>
    </cofactor>
    <text evidence="1">Binds 2 Zn(2+) ions per subunit.</text>
</comment>
<comment type="subunit">
    <text evidence="1">The RNAP catalytic core consists of 2 alpha, 1 beta, 1 beta' and 1 omega subunit. When a sigma factor is associated with the core the holoenzyme is formed, which can initiate transcription.</text>
</comment>
<comment type="similarity">
    <text evidence="1">Belongs to the RNA polymerase beta' chain family.</text>
</comment>